<protein>
    <recommendedName>
        <fullName>AT-rich interactive domain-containing protein 5A</fullName>
        <shortName>ARID domain-containing protein 5A</shortName>
    </recommendedName>
    <alternativeName>
        <fullName>Modulator recognition factor 1</fullName>
        <shortName>MRF-1</shortName>
    </alternativeName>
</protein>
<gene>
    <name type="primary">ARID5A</name>
    <name type="synonym">MRF1</name>
</gene>
<comment type="function">
    <text evidence="1 4 5 6">DNA-binding protein that may regulate transcription and act as a repressor by binding to AT-rich stretches in the promoter region of target genes (PubMed:8649988). May positively regulate chondrocyte-specific transcription such as of COL2A1 in collaboration with SOX9 and positively regulate histone H3 acetylation at chondrocyte-specific genes. May stimulate early-stage chondrocyte differentiation and inhibit later stage differention (By similarity). Can repress ESR1-mediated transcriptional activation; proposed to act as corepressor for selective nuclear hormone receptors (PubMed:15941852). As an RNA-binding protein, involved in the regulation of inflammatory response by stabilizing selective inflammation-related mRNAs, such as STAT3 and TBX21 (By similarity). Also stabilizes IL6 mRNA (PubMed:32209697). Binds to stem loop structures located in the 3'UTRs of IL6, STAT3 and TBX21 mRNAs; at least for STAT3 prevents binding of ZC3H12A to the mRNA stem loop structure thus inhibiting its degradation activity. Contributes to elevated IL6 levels possibly implicated in autoimmunity processes. IL6-dependent stabilization of STAT3 mRNA may promote differentiation of naive CD4+ T-cells into T-helper Th17 cells. In CD4+ T-cells may also inhibit RORC-induced Th17 cell differentiation independently of IL6 signaling. Stabilization of TBX21 mRNA contributes to elevated interferon-gamma secretion in Th1 cells possibly implicated in the establishment of septic shock (By similarity). Stabilizes TNFRSF4/OX40 mRNA by binding to the conserved stem loop structure in its 3'UTR; thereby competing with the mRNA-destabilizing functions of RC3H1 and endoribonuclease ZC3H12A (By similarity).</text>
</comment>
<comment type="subunit">
    <text evidence="1 4">Interacts with SOX9 (By similarity). Interacts with ESR1 (PubMed:15941852). Interacts with RORC (By similarity).</text>
</comment>
<comment type="interaction">
    <interactant intactId="EBI-948603">
        <id>Q03989</id>
    </interactant>
    <interactant intactId="EBI-11976299">
        <id>Q5BKX5-3</id>
        <label>ACTMAP</label>
    </interactant>
    <organismsDiffer>false</organismsDiffer>
    <experiments>3</experiments>
</comment>
<comment type="interaction">
    <interactant intactId="EBI-948603">
        <id>Q03989</id>
    </interactant>
    <interactant intactId="EBI-17183751">
        <id>X5D778</id>
        <label>ANKRD11</label>
    </interactant>
    <organismsDiffer>false</organismsDiffer>
    <experiments>3</experiments>
</comment>
<comment type="interaction">
    <interactant intactId="EBI-948603">
        <id>Q03989</id>
    </interactant>
    <interactant intactId="EBI-948603">
        <id>Q03989</id>
        <label>ARID5A</label>
    </interactant>
    <organismsDiffer>false</organismsDiffer>
    <experiments>3</experiments>
</comment>
<comment type="interaction">
    <interactant intactId="EBI-948603">
        <id>Q03989</id>
    </interactant>
    <interactant intactId="EBI-3923949">
        <id>Q8N8Y2</id>
        <label>ATP6V0D2</label>
    </interactant>
    <organismsDiffer>false</organismsDiffer>
    <experiments>3</experiments>
</comment>
<comment type="interaction">
    <interactant intactId="EBI-948603">
        <id>Q03989</id>
    </interactant>
    <interactant intactId="EBI-930964">
        <id>P54253</id>
        <label>ATXN1</label>
    </interactant>
    <organismsDiffer>false</organismsDiffer>
    <experiments>9</experiments>
</comment>
<comment type="interaction">
    <interactant intactId="EBI-948603">
        <id>Q03989</id>
    </interactant>
    <interactant intactId="EBI-8624731">
        <id>P0C7T5</id>
        <label>ATXN1L</label>
    </interactant>
    <organismsDiffer>false</organismsDiffer>
    <experiments>3</experiments>
</comment>
<comment type="interaction">
    <interactant intactId="EBI-948603">
        <id>Q03989</id>
    </interactant>
    <interactant intactId="EBI-2949658">
        <id>O95429</id>
        <label>BAG4</label>
    </interactant>
    <organismsDiffer>false</organismsDiffer>
    <experiments>3</experiments>
</comment>
<comment type="interaction">
    <interactant intactId="EBI-948603">
        <id>Q03989</id>
    </interactant>
    <interactant intactId="EBI-742750">
        <id>Q8TBE0</id>
        <label>BAHD1</label>
    </interactant>
    <organismsDiffer>false</organismsDiffer>
    <experiments>3</experiments>
</comment>
<comment type="interaction">
    <interactant intactId="EBI-948603">
        <id>Q03989</id>
    </interactant>
    <interactant intactId="EBI-11524452">
        <id>Q8N9N5-2</id>
        <label>BANP</label>
    </interactant>
    <organismsDiffer>false</organismsDiffer>
    <experiments>3</experiments>
</comment>
<comment type="interaction">
    <interactant intactId="EBI-948603">
        <id>Q03989</id>
    </interactant>
    <interactant intactId="EBI-11983447">
        <id>Q8N9W6-4</id>
        <label>BOLL</label>
    </interactant>
    <organismsDiffer>false</organismsDiffer>
    <experiments>3</experiments>
</comment>
<comment type="interaction">
    <interactant intactId="EBI-948603">
        <id>Q03989</id>
    </interactant>
    <interactant intactId="EBI-725606">
        <id>Q9NWQ9</id>
        <label>C14orf119</label>
    </interactant>
    <organismsDiffer>false</organismsDiffer>
    <experiments>3</experiments>
</comment>
<comment type="interaction">
    <interactant intactId="EBI-948603">
        <id>Q03989</id>
    </interactant>
    <interactant intactId="EBI-1383687">
        <id>Q9UQM7</id>
        <label>CAMK2A</label>
    </interactant>
    <organismsDiffer>false</organismsDiffer>
    <experiments>3</experiments>
</comment>
<comment type="interaction">
    <interactant intactId="EBI-948603">
        <id>Q03989</id>
    </interactant>
    <interactant intactId="EBI-744545">
        <id>Q8NEC5</id>
        <label>CATSPER1</label>
    </interactant>
    <organismsDiffer>false</organismsDiffer>
    <experiments>3</experiments>
</comment>
<comment type="interaction">
    <interactant intactId="EBI-948603">
        <id>Q03989</id>
    </interactant>
    <interactant intactId="EBI-744556">
        <id>Q96HB5</id>
        <label>CCDC120</label>
    </interactant>
    <organismsDiffer>false</organismsDiffer>
    <experiments>3</experiments>
</comment>
<comment type="interaction">
    <interactant intactId="EBI-948603">
        <id>Q03989</id>
    </interactant>
    <interactant intactId="EBI-10961624">
        <id>Q2TAC2-2</id>
        <label>CCDC57</label>
    </interactant>
    <organismsDiffer>false</organismsDiffer>
    <experiments>3</experiments>
</comment>
<comment type="interaction">
    <interactant intactId="EBI-948603">
        <id>Q03989</id>
    </interactant>
    <interactant intactId="EBI-456371">
        <id>P61024</id>
        <label>CKS1B</label>
    </interactant>
    <organismsDiffer>false</organismsDiffer>
    <experiments>5</experiments>
</comment>
<comment type="interaction">
    <interactant intactId="EBI-948603">
        <id>Q03989</id>
    </interactant>
    <interactant intactId="EBI-1053725">
        <id>P10606</id>
        <label>COX5B</label>
    </interactant>
    <organismsDiffer>false</organismsDiffer>
    <experiments>3</experiments>
</comment>
<comment type="interaction">
    <interactant intactId="EBI-948603">
        <id>Q03989</id>
    </interactant>
    <interactant intactId="EBI-7043337">
        <id>P05813</id>
        <label>CRYBA1</label>
    </interactant>
    <organismsDiffer>false</organismsDiffer>
    <experiments>3</experiments>
</comment>
<comment type="interaction">
    <interactant intactId="EBI-948603">
        <id>Q03989</id>
    </interactant>
    <interactant intactId="EBI-750444">
        <id>P53672</id>
        <label>CRYBA2</label>
    </interactant>
    <organismsDiffer>false</organismsDiffer>
    <experiments>3</experiments>
</comment>
<comment type="interaction">
    <interactant intactId="EBI-948603">
        <id>Q03989</id>
    </interactant>
    <interactant intactId="EBI-3867333">
        <id>A8MQ03</id>
        <label>CYSRT1</label>
    </interactant>
    <organismsDiffer>false</organismsDiffer>
    <experiments>3</experiments>
</comment>
<comment type="interaction">
    <interactant intactId="EBI-948603">
        <id>Q03989</id>
    </interactant>
    <interactant intactId="EBI-724310">
        <id>Q15038</id>
        <label>DAZAP2</label>
    </interactant>
    <organismsDiffer>false</organismsDiffer>
    <experiments>8</experiments>
</comment>
<comment type="interaction">
    <interactant intactId="EBI-948603">
        <id>Q03989</id>
    </interactant>
    <interactant intactId="EBI-2880244">
        <id>Q6PKX4</id>
        <label>DOK6</label>
    </interactant>
    <organismsDiffer>false</organismsDiffer>
    <experiments>3</experiments>
</comment>
<comment type="interaction">
    <interactant intactId="EBI-948603">
        <id>Q03989</id>
    </interactant>
    <interactant intactId="EBI-740376">
        <id>Q86UW9</id>
        <label>DTX2</label>
    </interactant>
    <organismsDiffer>false</organismsDiffer>
    <experiments>3</experiments>
</comment>
<comment type="interaction">
    <interactant intactId="EBI-948603">
        <id>Q03989</id>
    </interactant>
    <interactant intactId="EBI-78473">
        <id>P03372</id>
        <label>ESR1</label>
    </interactant>
    <organismsDiffer>false</organismsDiffer>
    <experiments>9</experiments>
</comment>
<comment type="interaction">
    <interactant intactId="EBI-948603">
        <id>Q03989</id>
    </interactant>
    <interactant intactId="EBI-10213520">
        <id>Q6NXG1</id>
        <label>ESRP1</label>
    </interactant>
    <organismsDiffer>false</organismsDiffer>
    <experiments>3</experiments>
</comment>
<comment type="interaction">
    <interactant intactId="EBI-948603">
        <id>Q03989</id>
    </interactant>
    <interactant intactId="EBI-12193763">
        <id>A1KXE4-2</id>
        <label>FAM168B</label>
    </interactant>
    <organismsDiffer>false</organismsDiffer>
    <experiments>3</experiments>
</comment>
<comment type="interaction">
    <interactant intactId="EBI-948603">
        <id>Q03989</id>
    </interactant>
    <interactant intactId="EBI-741101">
        <id>Q13643</id>
        <label>FHL3</label>
    </interactant>
    <organismsDiffer>false</organismsDiffer>
    <experiments>3</experiments>
</comment>
<comment type="interaction">
    <interactant intactId="EBI-948603">
        <id>Q03989</id>
    </interactant>
    <interactant intactId="EBI-17282008">
        <id>O60548</id>
        <label>FOXD2</label>
    </interactant>
    <organismsDiffer>false</organismsDiffer>
    <experiments>3</experiments>
</comment>
<comment type="interaction">
    <interactant intactId="EBI-948603">
        <id>Q03989</id>
    </interactant>
    <interactant intactId="EBI-1759806">
        <id>O75593</id>
        <label>FOXH1</label>
    </interactant>
    <organismsDiffer>false</organismsDiffer>
    <experiments>4</experiments>
</comment>
<comment type="interaction">
    <interactant intactId="EBI-948603">
        <id>Q03989</id>
    </interactant>
    <interactant intactId="EBI-12132270">
        <id>Q9BWX5</id>
        <label>GATA5</label>
    </interactant>
    <organismsDiffer>false</organismsDiffer>
    <experiments>3</experiments>
</comment>
<comment type="interaction">
    <interactant intactId="EBI-948603">
        <id>Q03989</id>
    </interactant>
    <interactant intactId="EBI-7251368">
        <id>Q9BZE0</id>
        <label>GLIS2</label>
    </interactant>
    <organismsDiffer>false</organismsDiffer>
    <experiments>3</experiments>
</comment>
<comment type="interaction">
    <interactant intactId="EBI-948603">
        <id>Q03989</id>
    </interactant>
    <interactant intactId="EBI-401755">
        <id>P62993</id>
        <label>GRB2</label>
    </interactant>
    <organismsDiffer>false</organismsDiffer>
    <experiments>3</experiments>
</comment>
<comment type="interaction">
    <interactant intactId="EBI-948603">
        <id>Q03989</id>
    </interactant>
    <interactant intactId="EBI-12094670">
        <id>Q8WUI4-6</id>
        <label>HDAC7</label>
    </interactant>
    <organismsDiffer>false</organismsDiffer>
    <experiments>3</experiments>
</comment>
<comment type="interaction">
    <interactant intactId="EBI-948603">
        <id>Q03989</id>
    </interactant>
    <interactant intactId="EBI-740785">
        <id>P49639</id>
        <label>HOXA1</label>
    </interactant>
    <organismsDiffer>false</organismsDiffer>
    <experiments>3</experiments>
</comment>
<comment type="interaction">
    <interactant intactId="EBI-948603">
        <id>Q03989</id>
    </interactant>
    <interactant intactId="EBI-3918847">
        <id>Q9H2F3</id>
        <label>HSD3B7</label>
    </interactant>
    <organismsDiffer>false</organismsDiffer>
    <experiments>3</experiments>
</comment>
<comment type="interaction">
    <interactant intactId="EBI-948603">
        <id>Q03989</id>
    </interactant>
    <interactant intactId="EBI-2881520">
        <id>Q9NRY2</id>
        <label>INIP</label>
    </interactant>
    <organismsDiffer>false</organismsDiffer>
    <experiments>3</experiments>
</comment>
<comment type="interaction">
    <interactant intactId="EBI-948603">
        <id>Q03989</id>
    </interactant>
    <interactant intactId="EBI-12100506">
        <id>P78412</id>
        <label>IRX6</label>
    </interactant>
    <organismsDiffer>false</organismsDiffer>
    <experiments>3</experiments>
</comment>
<comment type="interaction">
    <interactant intactId="EBI-948603">
        <id>Q03989</id>
    </interactant>
    <interactant intactId="EBI-12024294">
        <id>Q674X7-2</id>
        <label>KAZN</label>
    </interactant>
    <organismsDiffer>false</organismsDiffer>
    <experiments>3</experiments>
</comment>
<comment type="interaction">
    <interactant intactId="EBI-948603">
        <id>Q03989</id>
    </interactant>
    <interactant intactId="EBI-4397613">
        <id>Q7L273</id>
        <label>KCTD9</label>
    </interactant>
    <organismsDiffer>false</organismsDiffer>
    <experiments>3</experiments>
</comment>
<comment type="interaction">
    <interactant intactId="EBI-948603">
        <id>Q03989</id>
    </interactant>
    <interactant intactId="EBI-11997992">
        <id>Q8NAX2</id>
        <label>KDF1</label>
    </interactant>
    <organismsDiffer>false</organismsDiffer>
    <experiments>3</experiments>
</comment>
<comment type="interaction">
    <interactant intactId="EBI-948603">
        <id>Q03989</id>
    </interactant>
    <interactant intactId="EBI-10171774">
        <id>P60410</id>
        <label>KRTAP10-8</label>
    </interactant>
    <organismsDiffer>false</organismsDiffer>
    <experiments>3</experiments>
</comment>
<comment type="interaction">
    <interactant intactId="EBI-948603">
        <id>Q03989</id>
    </interactant>
    <interactant intactId="EBI-10176379">
        <id>P59991</id>
        <label>KRTAP12-2</label>
    </interactant>
    <organismsDiffer>false</organismsDiffer>
    <experiments>5</experiments>
</comment>
<comment type="interaction">
    <interactant intactId="EBI-948603">
        <id>Q03989</id>
    </interactant>
    <interactant intactId="EBI-11992140">
        <id>Q3LI76</id>
        <label>KRTAP15-1</label>
    </interactant>
    <organismsDiffer>false</organismsDiffer>
    <experiments>3</experiments>
</comment>
<comment type="interaction">
    <interactant intactId="EBI-948603">
        <id>Q03989</id>
    </interactant>
    <interactant intactId="EBI-12020132">
        <id>Q7Z4W3</id>
        <label>KRTAP19-3</label>
    </interactant>
    <organismsDiffer>false</organismsDiffer>
    <experiments>3</experiments>
</comment>
<comment type="interaction">
    <interactant intactId="EBI-948603">
        <id>Q03989</id>
    </interactant>
    <interactant intactId="EBI-1048945">
        <id>Q3LI72</id>
        <label>KRTAP19-5</label>
    </interactant>
    <organismsDiffer>false</organismsDiffer>
    <experiments>3</experiments>
</comment>
<comment type="interaction">
    <interactant intactId="EBI-948603">
        <id>Q03989</id>
    </interactant>
    <interactant intactId="EBI-10241353">
        <id>Q3SYF9</id>
        <label>KRTAP19-7</label>
    </interactant>
    <organismsDiffer>false</organismsDiffer>
    <experiments>3</experiments>
</comment>
<comment type="interaction">
    <interactant intactId="EBI-948603">
        <id>Q03989</id>
    </interactant>
    <interactant intactId="EBI-3957672">
        <id>Q6PEX3</id>
        <label>KRTAP26-1</label>
    </interactant>
    <organismsDiffer>false</organismsDiffer>
    <experiments>3</experiments>
</comment>
<comment type="interaction">
    <interactant intactId="EBI-948603">
        <id>Q03989</id>
    </interactant>
    <interactant intactId="EBI-3957694">
        <id>Q9BYR6</id>
        <label>KRTAP3-3</label>
    </interactant>
    <organismsDiffer>false</organismsDiffer>
    <experiments>3</experiments>
</comment>
<comment type="interaction">
    <interactant intactId="EBI-948603">
        <id>Q03989</id>
    </interactant>
    <interactant intactId="EBI-12111050">
        <id>Q3LI64</id>
        <label>KRTAP6-1</label>
    </interactant>
    <organismsDiffer>false</organismsDiffer>
    <experiments>3</experiments>
</comment>
<comment type="interaction">
    <interactant intactId="EBI-948603">
        <id>Q03989</id>
    </interactant>
    <interactant intactId="EBI-11962084">
        <id>Q3LI66</id>
        <label>KRTAP6-2</label>
    </interactant>
    <organismsDiffer>false</organismsDiffer>
    <experiments>3</experiments>
</comment>
<comment type="interaction">
    <interactant intactId="EBI-948603">
        <id>Q03989</id>
    </interactant>
    <interactant intactId="EBI-22311199">
        <id>Q3LI67</id>
        <label>KRTAP6-3</label>
    </interactant>
    <organismsDiffer>false</organismsDiffer>
    <experiments>3</experiments>
</comment>
<comment type="interaction">
    <interactant intactId="EBI-948603">
        <id>Q03989</id>
    </interactant>
    <interactant intactId="EBI-18394498">
        <id>Q8IUC3</id>
        <label>KRTAP7-1</label>
    </interactant>
    <organismsDiffer>false</organismsDiffer>
    <experiments>3</experiments>
</comment>
<comment type="interaction">
    <interactant intactId="EBI-948603">
        <id>Q03989</id>
    </interactant>
    <interactant intactId="EBI-10261141">
        <id>Q8IUC2</id>
        <label>KRTAP8-1</label>
    </interactant>
    <organismsDiffer>false</organismsDiffer>
    <experiments>3</experiments>
</comment>
<comment type="interaction">
    <interactant intactId="EBI-948603">
        <id>Q03989</id>
    </interactant>
    <interactant intactId="EBI-9088686">
        <id>Q14847-2</id>
        <label>LASP1</label>
    </interactant>
    <organismsDiffer>false</organismsDiffer>
    <experiments>3</experiments>
</comment>
<comment type="interaction">
    <interactant intactId="EBI-948603">
        <id>Q03989</id>
    </interactant>
    <interactant intactId="EBI-739546">
        <id>Q96PV6</id>
        <label>LENG8</label>
    </interactant>
    <organismsDiffer>false</organismsDiffer>
    <experiments>3</experiments>
</comment>
<comment type="interaction">
    <interactant intactId="EBI-948603">
        <id>Q03989</id>
    </interactant>
    <interactant intactId="EBI-10196832">
        <id>P0CW20</id>
        <label>LIMS4</label>
    </interactant>
    <organismsDiffer>false</organismsDiffer>
    <experiments>3</experiments>
</comment>
<comment type="interaction">
    <interactant intactId="EBI-948603">
        <id>Q03989</id>
    </interactant>
    <interactant intactId="EBI-725647">
        <id>Q99732</id>
        <label>LITAF</label>
    </interactant>
    <organismsDiffer>false</organismsDiffer>
    <experiments>3</experiments>
</comment>
<comment type="interaction">
    <interactant intactId="EBI-948603">
        <id>Q03989</id>
    </interactant>
    <interactant intactId="EBI-11959475">
        <id>P25791-3</id>
        <label>LMO2</label>
    </interactant>
    <organismsDiffer>false</organismsDiffer>
    <experiments>3</experiments>
</comment>
<comment type="interaction">
    <interactant intactId="EBI-948603">
        <id>Q03989</id>
    </interactant>
    <interactant intactId="EBI-6659161">
        <id>Q9Y586</id>
        <label>MAB21L2</label>
    </interactant>
    <organismsDiffer>false</organismsDiffer>
    <experiments>3</experiments>
</comment>
<comment type="interaction">
    <interactant intactId="EBI-948603">
        <id>Q03989</id>
    </interactant>
    <interactant intactId="EBI-716006">
        <id>Q9Y5V3</id>
        <label>MAGED1</label>
    </interactant>
    <organismsDiffer>false</organismsDiffer>
    <experiments>3</experiments>
</comment>
<comment type="interaction">
    <interactant intactId="EBI-948603">
        <id>Q03989</id>
    </interactant>
    <interactant intactId="EBI-724076">
        <id>Q99750</id>
        <label>MDFI</label>
    </interactant>
    <organismsDiffer>false</organismsDiffer>
    <experiments>5</experiments>
</comment>
<comment type="interaction">
    <interactant intactId="EBI-948603">
        <id>Q03989</id>
    </interactant>
    <interactant intactId="EBI-6137472">
        <id>Q9BRT3</id>
        <label>MIEN1</label>
    </interactant>
    <organismsDiffer>false</organismsDiffer>
    <experiments>3</experiments>
</comment>
<comment type="interaction">
    <interactant intactId="EBI-948603">
        <id>Q03989</id>
    </interactant>
    <interactant intactId="EBI-2340269">
        <id>Q13064</id>
        <label>MKRN3</label>
    </interactant>
    <organismsDiffer>false</organismsDiffer>
    <experiments>3</experiments>
</comment>
<comment type="interaction">
    <interactant intactId="EBI-948603">
        <id>Q03989</id>
    </interactant>
    <interactant intactId="EBI-9675802">
        <id>Q6PF18</id>
        <label>MORN3</label>
    </interactant>
    <organismsDiffer>false</organismsDiffer>
    <experiments>3</experiments>
</comment>
<comment type="interaction">
    <interactant intactId="EBI-948603">
        <id>Q03989</id>
    </interactant>
    <interactant intactId="EBI-6952711">
        <id>Q8WY64</id>
        <label>MYLIP</label>
    </interactant>
    <organismsDiffer>false</organismsDiffer>
    <experiments>3</experiments>
</comment>
<comment type="interaction">
    <interactant intactId="EBI-948603">
        <id>Q03989</id>
    </interactant>
    <interactant intactId="EBI-10297093">
        <id>Q9BRQ3</id>
        <label>NUDT22</label>
    </interactant>
    <organismsDiffer>false</organismsDiffer>
    <experiments>3</experiments>
</comment>
<comment type="interaction">
    <interactant intactId="EBI-948603">
        <id>Q03989</id>
    </interactant>
    <interactant intactId="EBI-5774125">
        <id>A1E959</id>
        <label>ODAM</label>
    </interactant>
    <organismsDiffer>false</organismsDiffer>
    <experiments>3</experiments>
</comment>
<comment type="interaction">
    <interactant intactId="EBI-948603">
        <id>Q03989</id>
    </interactant>
    <interactant intactId="EBI-10225049">
        <id>Q7RTU3</id>
        <label>OLIG3</label>
    </interactant>
    <organismsDiffer>false</organismsDiffer>
    <experiments>4</experiments>
</comment>
<comment type="interaction">
    <interactant intactId="EBI-948603">
        <id>Q03989</id>
    </interactant>
    <interactant intactId="EBI-740446">
        <id>P32242</id>
        <label>OTX1</label>
    </interactant>
    <organismsDiffer>false</organismsDiffer>
    <experiments>3</experiments>
</comment>
<comment type="interaction">
    <interactant intactId="EBI-948603">
        <id>Q03989</id>
    </interactant>
    <interactant intactId="EBI-530034">
        <id>O43189</id>
        <label>PHF1</label>
    </interactant>
    <organismsDiffer>false</organismsDiffer>
    <experiments>3</experiments>
</comment>
<comment type="interaction">
    <interactant intactId="EBI-948603">
        <id>Q03989</id>
    </interactant>
    <interactant intactId="EBI-14066006">
        <id>Q4G0R1</id>
        <label>PIBF1</label>
    </interactant>
    <organismsDiffer>false</organismsDiffer>
    <experiments>3</experiments>
</comment>
<comment type="interaction">
    <interactant intactId="EBI-948603">
        <id>Q03989</id>
    </interactant>
    <interactant intactId="EBI-714158">
        <id>Q13526</id>
        <label>PIN1</label>
    </interactant>
    <organismsDiffer>false</organismsDiffer>
    <experiments>3</experiments>
</comment>
<comment type="interaction">
    <interactant intactId="EBI-948603">
        <id>Q03989</id>
    </interactant>
    <interactant intactId="EBI-748265">
        <id>P78337</id>
        <label>PITX1</label>
    </interactant>
    <organismsDiffer>false</organismsDiffer>
    <experiments>3</experiments>
</comment>
<comment type="interaction">
    <interactant intactId="EBI-948603">
        <id>Q03989</id>
    </interactant>
    <interactant intactId="EBI-726466">
        <id>O15496</id>
        <label>PLA2G10</label>
    </interactant>
    <organismsDiffer>false</organismsDiffer>
    <experiments>3</experiments>
</comment>
<comment type="interaction">
    <interactant intactId="EBI-948603">
        <id>Q03989</id>
    </interactant>
    <interactant intactId="EBI-2876622">
        <id>Q9UPG8</id>
        <label>PLAGL2</label>
    </interactant>
    <organismsDiffer>false</organismsDiffer>
    <experiments>3</experiments>
</comment>
<comment type="interaction">
    <interactant intactId="EBI-948603">
        <id>Q03989</id>
    </interactant>
    <interactant intactId="EBI-12014286">
        <id>Q494U1-3</id>
        <label>PLEKHN1</label>
    </interactant>
    <organismsDiffer>false</organismsDiffer>
    <experiments>3</experiments>
</comment>
<comment type="interaction">
    <interactant intactId="EBI-948603">
        <id>Q03989</id>
    </interactant>
    <interactant intactId="EBI-50433196">
        <id>A0A6Q8PF08</id>
        <label>PMP22</label>
    </interactant>
    <organismsDiffer>false</organismsDiffer>
    <experiments>3</experiments>
</comment>
<comment type="interaction">
    <interactant intactId="EBI-948603">
        <id>Q03989</id>
    </interactant>
    <interactant intactId="EBI-302345">
        <id>Q8ND90</id>
        <label>PNMA1</label>
    </interactant>
    <organismsDiffer>false</organismsDiffer>
    <experiments>5</experiments>
</comment>
<comment type="interaction">
    <interactant intactId="EBI-948603">
        <id>Q03989</id>
    </interactant>
    <interactant intactId="EBI-8673859">
        <id>P28069</id>
        <label>POU1F1</label>
    </interactant>
    <organismsDiffer>false</organismsDiffer>
    <experiments>3</experiments>
</comment>
<comment type="interaction">
    <interactant intactId="EBI-948603">
        <id>Q03989</id>
    </interactant>
    <interactant intactId="EBI-11320284">
        <id>Q9NQX0</id>
        <label>PRDM6</label>
    </interactant>
    <organismsDiffer>false</organismsDiffer>
    <experiments>3</experiments>
</comment>
<comment type="interaction">
    <interactant intactId="EBI-948603">
        <id>Q03989</id>
    </interactant>
    <interactant intactId="EBI-1053424">
        <id>O43741</id>
        <label>PRKAB2</label>
    </interactant>
    <organismsDiffer>false</organismsDiffer>
    <experiments>3</experiments>
</comment>
<comment type="interaction">
    <interactant intactId="EBI-948603">
        <id>Q03989</id>
    </interactant>
    <interactant intactId="EBI-12754095">
        <id>P86480</id>
        <label>PRR20D</label>
    </interactant>
    <organismsDiffer>false</organismsDiffer>
    <experiments>3</experiments>
</comment>
<comment type="interaction">
    <interactant intactId="EBI-948603">
        <id>Q03989</id>
    </interactant>
    <interactant intactId="EBI-2798044">
        <id>Q2TAL8</id>
        <label>QRICH1</label>
    </interactant>
    <organismsDiffer>false</organismsDiffer>
    <experiments>3</experiments>
</comment>
<comment type="interaction">
    <interactant intactId="EBI-948603">
        <id>Q03989</id>
    </interactant>
    <interactant intactId="EBI-12123390">
        <id>Q9NWB1-5</id>
        <label>RBFOX1</label>
    </interactant>
    <organismsDiffer>false</organismsDiffer>
    <experiments>3</experiments>
</comment>
<comment type="interaction">
    <interactant intactId="EBI-948603">
        <id>Q03989</id>
    </interactant>
    <interactant intactId="EBI-740343">
        <id>Q93062-3</id>
        <label>RBPMS</label>
    </interactant>
    <organismsDiffer>false</organismsDiffer>
    <experiments>3</experiments>
</comment>
<comment type="interaction">
    <interactant intactId="EBI-948603">
        <id>Q03989</id>
    </interactant>
    <interactant intactId="EBI-11987469">
        <id>Q6ZRY4</id>
        <label>RBPMS2</label>
    </interactant>
    <organismsDiffer>false</organismsDiffer>
    <experiments>3</experiments>
</comment>
<comment type="interaction">
    <interactant intactId="EBI-948603">
        <id>Q03989</id>
    </interactant>
    <interactant intactId="EBI-712376">
        <id>P40937</id>
        <label>RFC5</label>
    </interactant>
    <organismsDiffer>false</organismsDiffer>
    <experiments>3</experiments>
</comment>
<comment type="interaction">
    <interactant intactId="EBI-948603">
        <id>Q03989</id>
    </interactant>
    <interactant intactId="EBI-2845060">
        <id>Q7L0R7</id>
        <label>RNF44</label>
    </interactant>
    <organismsDiffer>false</organismsDiffer>
    <experiments>3</experiments>
</comment>
<comment type="interaction">
    <interactant intactId="EBI-948603">
        <id>Q03989</id>
    </interactant>
    <interactant intactId="EBI-6422642">
        <id>Q01974</id>
        <label>ROR2</label>
    </interactant>
    <organismsDiffer>false</organismsDiffer>
    <experiments>3</experiments>
</comment>
<comment type="interaction">
    <interactant intactId="EBI-948603">
        <id>Q03989</id>
    </interactant>
    <interactant intactId="EBI-12320085">
        <id>O95486-2</id>
        <label>SEC24A</label>
    </interactant>
    <organismsDiffer>false</organismsDiffer>
    <experiments>3</experiments>
</comment>
<comment type="interaction">
    <interactant intactId="EBI-948603">
        <id>Q03989</id>
    </interactant>
    <interactant intactId="EBI-8463848">
        <id>Q8NB12</id>
        <label>SMYD1</label>
    </interactant>
    <organismsDiffer>false</organismsDiffer>
    <experiments>3</experiments>
</comment>
<comment type="interaction">
    <interactant intactId="EBI-948603">
        <id>Q03989</id>
    </interactant>
    <interactant intactId="EBI-12288855">
        <id>Q5JUK2</id>
        <label>SOHLH1</label>
    </interactant>
    <organismsDiffer>false</organismsDiffer>
    <experiments>3</experiments>
</comment>
<comment type="interaction">
    <interactant intactId="EBI-948603">
        <id>Q03989</id>
    </interactant>
    <interactant intactId="EBI-8644516">
        <id>Q9BXF9</id>
        <label>TEKT3</label>
    </interactant>
    <organismsDiffer>false</organismsDiffer>
    <experiments>3</experiments>
</comment>
<comment type="interaction">
    <interactant intactId="EBI-948603">
        <id>Q03989</id>
    </interactant>
    <interactant intactId="EBI-750487">
        <id>Q8WW24</id>
        <label>TEKT4</label>
    </interactant>
    <organismsDiffer>false</organismsDiffer>
    <experiments>3</experiments>
</comment>
<comment type="interaction">
    <interactant intactId="EBI-948603">
        <id>Q03989</id>
    </interactant>
    <interactant intactId="EBI-744726">
        <id>Q8NEK8</id>
        <label>TENT5D</label>
    </interactant>
    <organismsDiffer>false</organismsDiffer>
    <experiments>3</experiments>
</comment>
<comment type="interaction">
    <interactant intactId="EBI-948603">
        <id>Q03989</id>
    </interactant>
    <interactant intactId="EBI-12029034">
        <id>Q96PF1</id>
        <label>TGM7</label>
    </interactant>
    <organismsDiffer>false</organismsDiffer>
    <experiments>3</experiments>
</comment>
<comment type="interaction">
    <interactant intactId="EBI-948603">
        <id>Q03989</id>
    </interactant>
    <interactant intactId="EBI-949753">
        <id>Q63HR2</id>
        <label>TNS2</label>
    </interactant>
    <organismsDiffer>false</organismsDiffer>
    <experiments>3</experiments>
</comment>
<comment type="interaction">
    <interactant intactId="EBI-948603">
        <id>Q03989</id>
    </interactant>
    <interactant intactId="EBI-359224">
        <id>Q13077</id>
        <label>TRAF1</label>
    </interactant>
    <organismsDiffer>false</organismsDiffer>
    <experiments>3</experiments>
</comment>
<comment type="interaction">
    <interactant intactId="EBI-948603">
        <id>Q03989</id>
    </interactant>
    <interactant intactId="EBI-719493">
        <id>P14373</id>
        <label>TRIM27</label>
    </interactant>
    <organismsDiffer>false</organismsDiffer>
    <experiments>3</experiments>
</comment>
<comment type="interaction">
    <interactant intactId="EBI-948603">
        <id>Q03989</id>
    </interactant>
    <interactant intactId="EBI-10259086">
        <id>Q86UV6-2</id>
        <label>TRIM74</label>
    </interactant>
    <organismsDiffer>false</organismsDiffer>
    <experiments>3</experiments>
</comment>
<comment type="interaction">
    <interactant intactId="EBI-948603">
        <id>Q03989</id>
    </interactant>
    <interactant intactId="EBI-12806590">
        <id>Q86WV8</id>
        <label>TSC1</label>
    </interactant>
    <organismsDiffer>false</organismsDiffer>
    <experiments>3</experiments>
</comment>
<comment type="interaction">
    <interactant intactId="EBI-948603">
        <id>Q03989</id>
    </interactant>
    <interactant intactId="EBI-372432">
        <id>Q8WW01</id>
        <label>TSEN15</label>
    </interactant>
    <organismsDiffer>false</organismsDiffer>
    <experiments>3</experiments>
</comment>
<comment type="interaction">
    <interactant intactId="EBI-948603">
        <id>Q03989</id>
    </interactant>
    <interactant intactId="EBI-3918381">
        <id>Q96PN8</id>
        <label>TSSK3</label>
    </interactant>
    <organismsDiffer>false</organismsDiffer>
    <experiments>3</experiments>
</comment>
<comment type="interaction">
    <interactant intactId="EBI-948603">
        <id>Q03989</id>
    </interactant>
    <interactant intactId="EBI-12867288">
        <id>Q8WUN7</id>
        <label>UBTD2</label>
    </interactant>
    <organismsDiffer>false</organismsDiffer>
    <experiments>3</experiments>
</comment>
<comment type="interaction">
    <interactant intactId="EBI-948603">
        <id>Q03989</id>
    </interactant>
    <interactant intactId="EBI-2511991">
        <id>Q9Y2K6</id>
        <label>USP20</label>
    </interactant>
    <organismsDiffer>false</organismsDiffer>
    <experiments>3</experiments>
</comment>
<comment type="interaction">
    <interactant intactId="EBI-948603">
        <id>Q03989</id>
    </interactant>
    <interactant intactId="EBI-2107455">
        <id>Q08AM6</id>
        <label>VAC14</label>
    </interactant>
    <organismsDiffer>false</organismsDiffer>
    <experiments>3</experiments>
</comment>
<comment type="interaction">
    <interactant intactId="EBI-948603">
        <id>Q03989</id>
    </interactant>
    <interactant intactId="EBI-10191303">
        <id>O95231</id>
        <label>VENTX</label>
    </interactant>
    <organismsDiffer>false</organismsDiffer>
    <experiments>5</experiments>
</comment>
<comment type="interaction">
    <interactant intactId="EBI-948603">
        <id>Q03989</id>
    </interactant>
    <interactant intactId="EBI-742550">
        <id>Q96K80</id>
        <label>ZC3H10</label>
    </interactant>
    <organismsDiffer>false</organismsDiffer>
    <experiments>3</experiments>
</comment>
<comment type="interaction">
    <interactant intactId="EBI-948603">
        <id>Q03989</id>
    </interactant>
    <interactant intactId="EBI-11963196">
        <id>Q15915</id>
        <label>ZIC1</label>
    </interactant>
    <organismsDiffer>false</organismsDiffer>
    <experiments>3</experiments>
</comment>
<comment type="interaction">
    <interactant intactId="EBI-948603">
        <id>Q03989</id>
    </interactant>
    <interactant intactId="EBI-8832437">
        <id>Q96F45</id>
        <label>ZNF503</label>
    </interactant>
    <organismsDiffer>false</organismsDiffer>
    <experiments>3</experiments>
</comment>
<comment type="interaction">
    <interactant intactId="EBI-948603">
        <id>Q03989</id>
    </interactant>
    <interactant intactId="EBI-12834294">
        <id>Q7L2R6-2</id>
        <label>ZNF765</label>
    </interactant>
    <organismsDiffer>false</organismsDiffer>
    <experiments>3</experiments>
</comment>
<comment type="subcellular location">
    <subcellularLocation>
        <location evidence="2 6">Nucleus</location>
    </subcellularLocation>
</comment>
<comment type="alternative products">
    <event type="alternative splicing"/>
    <isoform>
        <id>Q03989-1</id>
        <name>1</name>
        <sequence type="displayed"/>
    </isoform>
    <isoform>
        <id>Q03989-5</id>
        <name>2</name>
        <sequence type="described" ref="VSP_058969"/>
    </isoform>
</comment>
<comment type="PTM">
    <text evidence="1">Phosphorylated by MAPK14 on serine residues involving a TLR4 signaling pathway upon lipopolysaccharide (LPS) stimulation leading to its ubiquitination and proteasomal degradation.</text>
</comment>
<comment type="PTM">
    <text evidence="1">Ubiquitinated leading to proteasomal degradation; involving WWP1 linked to MAPK14-mediated phosphorylation upon LPS stimulation.</text>
</comment>
<comment type="sequence caution" evidence="7">
    <conflict type="erroneous initiation">
        <sequence resource="EMBL-CDS" id="AAA36325"/>
    </conflict>
</comment>
<keyword id="KW-0010">Activator</keyword>
<keyword id="KW-0025">Alternative splicing</keyword>
<keyword id="KW-0238">DNA-binding</keyword>
<keyword id="KW-0391">Immunity</keyword>
<keyword id="KW-0399">Innate immunity</keyword>
<keyword id="KW-1017">Isopeptide bond</keyword>
<keyword id="KW-0539">Nucleus</keyword>
<keyword id="KW-0597">Phosphoprotein</keyword>
<keyword id="KW-1267">Proteomics identification</keyword>
<keyword id="KW-1185">Reference proteome</keyword>
<keyword id="KW-0678">Repressor</keyword>
<keyword id="KW-0694">RNA-binding</keyword>
<keyword id="KW-0804">Transcription</keyword>
<keyword id="KW-0805">Transcription regulation</keyword>
<keyword id="KW-0832">Ubl conjugation</keyword>
<evidence type="ECO:0000250" key="1">
    <source>
        <dbReference type="UniProtKB" id="Q3U108"/>
    </source>
</evidence>
<evidence type="ECO:0000255" key="2">
    <source>
        <dbReference type="PROSITE-ProRule" id="PRU00355"/>
    </source>
</evidence>
<evidence type="ECO:0000256" key="3">
    <source>
        <dbReference type="SAM" id="MobiDB-lite"/>
    </source>
</evidence>
<evidence type="ECO:0000269" key="4">
    <source>
    </source>
</evidence>
<evidence type="ECO:0000269" key="5">
    <source>
    </source>
</evidence>
<evidence type="ECO:0000269" key="6">
    <source>
    </source>
</evidence>
<evidence type="ECO:0000305" key="7"/>
<proteinExistence type="evidence at protein level"/>
<dbReference type="EMBL" id="M62324">
    <property type="protein sequence ID" value="AAA36325.1"/>
    <property type="status" value="ALT_INIT"/>
    <property type="molecule type" value="mRNA"/>
</dbReference>
<dbReference type="EMBL" id="AC013270">
    <property type="status" value="NOT_ANNOTATED_CDS"/>
    <property type="molecule type" value="Genomic_DNA"/>
</dbReference>
<dbReference type="EMBL" id="CH471207">
    <property type="protein sequence ID" value="EAW71359.1"/>
    <property type="molecule type" value="Genomic_DNA"/>
</dbReference>
<dbReference type="EMBL" id="BC047390">
    <property type="status" value="NOT_ANNOTATED_CDS"/>
    <property type="molecule type" value="mRNA"/>
</dbReference>
<dbReference type="CCDS" id="CCDS33251.1">
    <molecule id="Q03989-1"/>
</dbReference>
<dbReference type="CCDS" id="CCDS82484.1">
    <molecule id="Q03989-5"/>
</dbReference>
<dbReference type="PIR" id="S27962">
    <property type="entry name" value="S27962"/>
</dbReference>
<dbReference type="RefSeq" id="NP_001306021.1">
    <molecule id="Q03989-5"/>
    <property type="nucleotide sequence ID" value="NM_001319092.1"/>
</dbReference>
<dbReference type="RefSeq" id="NP_997646.1">
    <molecule id="Q03989-1"/>
    <property type="nucleotide sequence ID" value="NM_212481.3"/>
</dbReference>
<dbReference type="BMRB" id="Q03989"/>
<dbReference type="SMR" id="Q03989"/>
<dbReference type="BioGRID" id="116074">
    <property type="interactions" value="135"/>
</dbReference>
<dbReference type="CORUM" id="Q03989"/>
<dbReference type="FunCoup" id="Q03989">
    <property type="interactions" value="1306"/>
</dbReference>
<dbReference type="IntAct" id="Q03989">
    <property type="interactions" value="126"/>
</dbReference>
<dbReference type="MINT" id="Q03989"/>
<dbReference type="STRING" id="9606.ENSP00000350078"/>
<dbReference type="GlyGen" id="Q03989">
    <property type="glycosylation" value="1 site, 1 O-linked glycan (1 site)"/>
</dbReference>
<dbReference type="iPTMnet" id="Q03989"/>
<dbReference type="PhosphoSitePlus" id="Q03989"/>
<dbReference type="BioMuta" id="ARID5A"/>
<dbReference type="DMDM" id="148840818"/>
<dbReference type="jPOST" id="Q03989"/>
<dbReference type="MassIVE" id="Q03989"/>
<dbReference type="PaxDb" id="9606-ENSP00000350078"/>
<dbReference type="PeptideAtlas" id="Q03989"/>
<dbReference type="ProteomicsDB" id="58234"/>
<dbReference type="ProteomicsDB" id="8111"/>
<dbReference type="Antibodypedia" id="1050">
    <property type="antibodies" value="216 antibodies from 18 providers"/>
</dbReference>
<dbReference type="DNASU" id="10865"/>
<dbReference type="Ensembl" id="ENST00000357485.8">
    <molecule id="Q03989-1"/>
    <property type="protein sequence ID" value="ENSP00000350078.3"/>
    <property type="gene ID" value="ENSG00000196843.18"/>
</dbReference>
<dbReference type="Ensembl" id="ENST00000454558.3">
    <molecule id="Q03989-5"/>
    <property type="protein sequence ID" value="ENSP00000400785.1"/>
    <property type="gene ID" value="ENSG00000196843.18"/>
</dbReference>
<dbReference type="GeneID" id="10865"/>
<dbReference type="KEGG" id="hsa:10865"/>
<dbReference type="MANE-Select" id="ENST00000357485.8">
    <property type="protein sequence ID" value="ENSP00000350078.3"/>
    <property type="RefSeq nucleotide sequence ID" value="NM_212481.3"/>
    <property type="RefSeq protein sequence ID" value="NP_997646.1"/>
</dbReference>
<dbReference type="UCSC" id="uc002swe.4">
    <molecule id="Q03989-1"/>
    <property type="organism name" value="human"/>
</dbReference>
<dbReference type="UCSC" id="uc031ron.2">
    <property type="organism name" value="human"/>
</dbReference>
<dbReference type="AGR" id="HGNC:17361"/>
<dbReference type="CTD" id="10865"/>
<dbReference type="DisGeNET" id="10865"/>
<dbReference type="GeneCards" id="ARID5A"/>
<dbReference type="HGNC" id="HGNC:17361">
    <property type="gene designation" value="ARID5A"/>
</dbReference>
<dbReference type="HPA" id="ENSG00000196843">
    <property type="expression patterns" value="Low tissue specificity"/>
</dbReference>
<dbReference type="MalaCards" id="ARID5A"/>
<dbReference type="MIM" id="611583">
    <property type="type" value="gene"/>
</dbReference>
<dbReference type="neXtProt" id="NX_Q03989"/>
<dbReference type="OpenTargets" id="ENSG00000196843"/>
<dbReference type="PharmGKB" id="PA134937822"/>
<dbReference type="VEuPathDB" id="HostDB:ENSG00000196843"/>
<dbReference type="eggNOG" id="KOG2744">
    <property type="taxonomic scope" value="Eukaryota"/>
</dbReference>
<dbReference type="GeneTree" id="ENSGT00940000161253"/>
<dbReference type="InParanoid" id="Q03989"/>
<dbReference type="OMA" id="DQMVPGK"/>
<dbReference type="OrthoDB" id="1938591at2759"/>
<dbReference type="PAN-GO" id="Q03989">
    <property type="GO annotations" value="3 GO annotations based on evolutionary models"/>
</dbReference>
<dbReference type="PhylomeDB" id="Q03989"/>
<dbReference type="TreeFam" id="TF324725"/>
<dbReference type="PathwayCommons" id="Q03989"/>
<dbReference type="SignaLink" id="Q03989"/>
<dbReference type="BioGRID-ORCS" id="10865">
    <property type="hits" value="35 hits in 1181 CRISPR screens"/>
</dbReference>
<dbReference type="ChiTaRS" id="ARID5A">
    <property type="organism name" value="human"/>
</dbReference>
<dbReference type="GenomeRNAi" id="10865"/>
<dbReference type="Pharos" id="Q03989">
    <property type="development level" value="Tbio"/>
</dbReference>
<dbReference type="PRO" id="PR:Q03989"/>
<dbReference type="Proteomes" id="UP000005640">
    <property type="component" value="Chromosome 2"/>
</dbReference>
<dbReference type="RNAct" id="Q03989">
    <property type="molecule type" value="protein"/>
</dbReference>
<dbReference type="Bgee" id="ENSG00000196843">
    <property type="expression patterns" value="Expressed in mucosa of stomach and 182 other cell types or tissues"/>
</dbReference>
<dbReference type="ExpressionAtlas" id="Q03989">
    <property type="expression patterns" value="baseline and differential"/>
</dbReference>
<dbReference type="GO" id="GO:0005730">
    <property type="term" value="C:nucleolus"/>
    <property type="evidence" value="ECO:0000314"/>
    <property type="project" value="HPA"/>
</dbReference>
<dbReference type="GO" id="GO:0005654">
    <property type="term" value="C:nucleoplasm"/>
    <property type="evidence" value="ECO:0000314"/>
    <property type="project" value="HPA"/>
</dbReference>
<dbReference type="GO" id="GO:0005634">
    <property type="term" value="C:nucleus"/>
    <property type="evidence" value="ECO:0000318"/>
    <property type="project" value="GO_Central"/>
</dbReference>
<dbReference type="GO" id="GO:0005667">
    <property type="term" value="C:transcription regulator complex"/>
    <property type="evidence" value="ECO:0007669"/>
    <property type="project" value="Ensembl"/>
</dbReference>
<dbReference type="GO" id="GO:0003682">
    <property type="term" value="F:chromatin binding"/>
    <property type="evidence" value="ECO:0007669"/>
    <property type="project" value="Ensembl"/>
</dbReference>
<dbReference type="GO" id="GO:0003677">
    <property type="term" value="F:DNA binding"/>
    <property type="evidence" value="ECO:0000304"/>
    <property type="project" value="GDB"/>
</dbReference>
<dbReference type="GO" id="GO:0042802">
    <property type="term" value="F:identical protein binding"/>
    <property type="evidence" value="ECO:0000353"/>
    <property type="project" value="IntAct"/>
</dbReference>
<dbReference type="GO" id="GO:0035925">
    <property type="term" value="F:mRNA 3'-UTR AU-rich region binding"/>
    <property type="evidence" value="ECO:0000314"/>
    <property type="project" value="UniProtKB"/>
</dbReference>
<dbReference type="GO" id="GO:0050681">
    <property type="term" value="F:nuclear androgen receptor binding"/>
    <property type="evidence" value="ECO:0000314"/>
    <property type="project" value="UniProtKB"/>
</dbReference>
<dbReference type="GO" id="GO:0030331">
    <property type="term" value="F:nuclear estrogen receptor binding"/>
    <property type="evidence" value="ECO:0000314"/>
    <property type="project" value="UniProtKB"/>
</dbReference>
<dbReference type="GO" id="GO:0046965">
    <property type="term" value="F:nuclear retinoid X receptor binding"/>
    <property type="evidence" value="ECO:0000314"/>
    <property type="project" value="UniProtKB"/>
</dbReference>
<dbReference type="GO" id="GO:0046966">
    <property type="term" value="F:nuclear thyroid hormone receptor binding"/>
    <property type="evidence" value="ECO:0000314"/>
    <property type="project" value="UniProtKB"/>
</dbReference>
<dbReference type="GO" id="GO:0035613">
    <property type="term" value="F:RNA stem-loop binding"/>
    <property type="evidence" value="ECO:0007669"/>
    <property type="project" value="Ensembl"/>
</dbReference>
<dbReference type="GO" id="GO:0043565">
    <property type="term" value="F:sequence-specific DNA binding"/>
    <property type="evidence" value="ECO:0000314"/>
    <property type="project" value="NTNU_SB"/>
</dbReference>
<dbReference type="GO" id="GO:0000976">
    <property type="term" value="F:transcription cis-regulatory region binding"/>
    <property type="evidence" value="ECO:0000318"/>
    <property type="project" value="GO_Central"/>
</dbReference>
<dbReference type="GO" id="GO:0003714">
    <property type="term" value="F:transcription corepressor activity"/>
    <property type="evidence" value="ECO:0000314"/>
    <property type="project" value="UniProtKB"/>
</dbReference>
<dbReference type="GO" id="GO:0008134">
    <property type="term" value="F:transcription factor binding"/>
    <property type="evidence" value="ECO:0000314"/>
    <property type="project" value="UniProtKB"/>
</dbReference>
<dbReference type="GO" id="GO:0071391">
    <property type="term" value="P:cellular response to estrogen stimulus"/>
    <property type="evidence" value="ECO:0000314"/>
    <property type="project" value="UniProtKB"/>
</dbReference>
<dbReference type="GO" id="GO:0071222">
    <property type="term" value="P:cellular response to lipopolysaccharide"/>
    <property type="evidence" value="ECO:0007669"/>
    <property type="project" value="Ensembl"/>
</dbReference>
<dbReference type="GO" id="GO:0002062">
    <property type="term" value="P:chondrocyte differentiation"/>
    <property type="evidence" value="ECO:0007669"/>
    <property type="project" value="Ensembl"/>
</dbReference>
<dbReference type="GO" id="GO:0045087">
    <property type="term" value="P:innate immune response"/>
    <property type="evidence" value="ECO:0007669"/>
    <property type="project" value="UniProtKB-KW"/>
</dbReference>
<dbReference type="GO" id="GO:0045892">
    <property type="term" value="P:negative regulation of DNA-templated transcription"/>
    <property type="evidence" value="ECO:0000304"/>
    <property type="project" value="GDB"/>
</dbReference>
<dbReference type="GO" id="GO:0000122">
    <property type="term" value="P:negative regulation of transcription by RNA polymerase II"/>
    <property type="evidence" value="ECO:0000314"/>
    <property type="project" value="UniProtKB"/>
</dbReference>
<dbReference type="GO" id="GO:1905870">
    <property type="term" value="P:positive regulation of 3'-UTR-mediated mRNA stabilization"/>
    <property type="evidence" value="ECO:0000315"/>
    <property type="project" value="UniProtKB"/>
</dbReference>
<dbReference type="GO" id="GO:0032740">
    <property type="term" value="P:positive regulation of interleukin-17 production"/>
    <property type="evidence" value="ECO:0007669"/>
    <property type="project" value="Ensembl"/>
</dbReference>
<dbReference type="GO" id="GO:0032755">
    <property type="term" value="P:positive regulation of interleukin-6 production"/>
    <property type="evidence" value="ECO:0007669"/>
    <property type="project" value="Ensembl"/>
</dbReference>
<dbReference type="GO" id="GO:2000556">
    <property type="term" value="P:positive regulation of T-helper 1 cell cytokine production"/>
    <property type="evidence" value="ECO:0007669"/>
    <property type="project" value="Ensembl"/>
</dbReference>
<dbReference type="GO" id="GO:2000318">
    <property type="term" value="P:positive regulation of T-helper 17 type immune response"/>
    <property type="evidence" value="ECO:0007669"/>
    <property type="project" value="Ensembl"/>
</dbReference>
<dbReference type="GO" id="GO:0045944">
    <property type="term" value="P:positive regulation of transcription by RNA polymerase II"/>
    <property type="evidence" value="ECO:0007669"/>
    <property type="project" value="Ensembl"/>
</dbReference>
<dbReference type="GO" id="GO:0032760">
    <property type="term" value="P:positive regulation of tumor necrosis factor production"/>
    <property type="evidence" value="ECO:0007669"/>
    <property type="project" value="Ensembl"/>
</dbReference>
<dbReference type="GO" id="GO:0032729">
    <property type="term" value="P:positive regulation of type II interferon production"/>
    <property type="evidence" value="ECO:0007669"/>
    <property type="project" value="Ensembl"/>
</dbReference>
<dbReference type="GO" id="GO:0006357">
    <property type="term" value="P:regulation of transcription by RNA polymerase II"/>
    <property type="evidence" value="ECO:0000318"/>
    <property type="project" value="GO_Central"/>
</dbReference>
<dbReference type="CDD" id="cd16884">
    <property type="entry name" value="ARID_ARID5A"/>
    <property type="match status" value="1"/>
</dbReference>
<dbReference type="FunFam" id="1.10.150.60:FF:000004">
    <property type="entry name" value="AT-rich interactive domain-containing protein 5B"/>
    <property type="match status" value="1"/>
</dbReference>
<dbReference type="Gene3D" id="1.10.150.60">
    <property type="entry name" value="ARID DNA-binding domain"/>
    <property type="match status" value="1"/>
</dbReference>
<dbReference type="InterPro" id="IPR051232">
    <property type="entry name" value="ARID/SWI1_ChromRemod"/>
</dbReference>
<dbReference type="InterPro" id="IPR001606">
    <property type="entry name" value="ARID_dom"/>
</dbReference>
<dbReference type="InterPro" id="IPR036431">
    <property type="entry name" value="ARID_dom_sf"/>
</dbReference>
<dbReference type="PANTHER" id="PTHR13964:SF25">
    <property type="entry name" value="AT-RICH INTERACTIVE DOMAIN-CONTAINING PROTEIN 5A"/>
    <property type="match status" value="1"/>
</dbReference>
<dbReference type="PANTHER" id="PTHR13964">
    <property type="entry name" value="RBP-RELATED"/>
    <property type="match status" value="1"/>
</dbReference>
<dbReference type="Pfam" id="PF01388">
    <property type="entry name" value="ARID"/>
    <property type="match status" value="1"/>
</dbReference>
<dbReference type="SMART" id="SM01014">
    <property type="entry name" value="ARID"/>
    <property type="match status" value="1"/>
</dbReference>
<dbReference type="SMART" id="SM00501">
    <property type="entry name" value="BRIGHT"/>
    <property type="match status" value="1"/>
</dbReference>
<dbReference type="SUPFAM" id="SSF46774">
    <property type="entry name" value="ARID-like"/>
    <property type="match status" value="1"/>
</dbReference>
<dbReference type="PROSITE" id="PS51011">
    <property type="entry name" value="ARID"/>
    <property type="match status" value="1"/>
</dbReference>
<feature type="chain" id="PRO_0000288930" description="AT-rich interactive domain-containing protein 5A">
    <location>
        <begin position="1"/>
        <end position="594"/>
    </location>
</feature>
<feature type="domain" description="ARID" evidence="2">
    <location>
        <begin position="55"/>
        <end position="147"/>
    </location>
</feature>
<feature type="region of interest" description="Interaction with SOX9" evidence="1">
    <location>
        <begin position="1"/>
        <end position="300"/>
    </location>
</feature>
<feature type="region of interest" description="Disordered" evidence="3">
    <location>
        <begin position="1"/>
        <end position="56"/>
    </location>
</feature>
<feature type="region of interest" description="Disordered" evidence="3">
    <location>
        <begin position="146"/>
        <end position="223"/>
    </location>
</feature>
<feature type="region of interest" description="Disordered" evidence="3">
    <location>
        <begin position="281"/>
        <end position="331"/>
    </location>
</feature>
<feature type="region of interest" description="Disordered" evidence="3">
    <location>
        <begin position="426"/>
        <end position="454"/>
    </location>
</feature>
<feature type="compositionally biased region" description="Basic and acidic residues" evidence="3">
    <location>
        <begin position="165"/>
        <end position="189"/>
    </location>
</feature>
<feature type="compositionally biased region" description="Polar residues" evidence="3">
    <location>
        <begin position="297"/>
        <end position="306"/>
    </location>
</feature>
<feature type="modified residue" description="Phosphoserine" evidence="1">
    <location>
        <position position="23"/>
    </location>
</feature>
<feature type="modified residue" description="Phosphoserine" evidence="1">
    <location>
        <position position="256"/>
    </location>
</feature>
<feature type="modified residue" description="Phosphoserine" evidence="1">
    <location>
        <position position="289"/>
    </location>
</feature>
<feature type="modified residue" description="Phosphoserine" evidence="1">
    <location>
        <position position="438"/>
    </location>
</feature>
<feature type="modified residue" description="Phosphoserine" evidence="1">
    <location>
        <position position="463"/>
    </location>
</feature>
<feature type="cross-link" description="Glycyl lysine isopeptide (Lys-Gly) (interchain with G-Cter in ubiquitin)" evidence="1">
    <location>
        <position position="85"/>
    </location>
</feature>
<feature type="cross-link" description="Glycyl lysine isopeptide (Lys-Gly) (interchain with G-Cter in ubiquitin)" evidence="1">
    <location>
        <position position="94"/>
    </location>
</feature>
<feature type="splice variant" id="VSP_058969" description="In isoform 2.">
    <location>
        <begin position="1"/>
        <end position="68"/>
    </location>
</feature>
<feature type="sequence conflict" description="In Ref. 4; BC047390." evidence="7" ref="4">
    <original>D</original>
    <variation>G</variation>
    <location>
        <position position="392"/>
    </location>
</feature>
<sequence length="594" mass="64074">MAAPVKGNRKQSTEGDALDPPASPKPAGKQNGIQNPISLEDSPEAGGEREEEQEREEEQAFLVSLYKFMKERHTPIERVPHLGFKQINLWKIYKAVEKLGAYELVTGRRLWKNVYDELGGSPGSTSAATCTRRHYERLVLPYVRHLKGEDDKPLPTSKPRKQYKMAKENRGDDGATERPKKAKEERRMDQMMPGKTKADAADPAPLPSQEPPRNSTEQQGLASGSSVSFVGASGCPEAYKRLLSSFYCKGTHGIMSPLAKKKLLAQVSKVEALQCQEEGCRHGAEPQASPAVHLPESPQSPKGLTENSRHRLTPQEGLQAPGGSLREEAQAGPCPAAPIFKGCFYTHPTEVLKPVSQHPRDFFSRLKDGVLLGPPGKEGLSVKEPQLVWGGDANRPSAFHKGGSRKGILYPKPKACWVSPMAKVPAESPTLPPTFPSSPGLGSKRSLEEEGAAHSGKRLRAVSPFLKEADAKKCGAKPAGSGLVSCLLGPALGPVPPEAYRGTMLHCPLNFTGTPGPLKGQAALPFSPLVIPAFPAHFLATAGPSPMAAGLMHFPPTSFDSALRHRLCPASSAWHAPPVTTYAAPHFFHLNTKL</sequence>
<name>ARI5A_HUMAN</name>
<organism>
    <name type="scientific">Homo sapiens</name>
    <name type="common">Human</name>
    <dbReference type="NCBI Taxonomy" id="9606"/>
    <lineage>
        <taxon>Eukaryota</taxon>
        <taxon>Metazoa</taxon>
        <taxon>Chordata</taxon>
        <taxon>Craniata</taxon>
        <taxon>Vertebrata</taxon>
        <taxon>Euteleostomi</taxon>
        <taxon>Mammalia</taxon>
        <taxon>Eutheria</taxon>
        <taxon>Euarchontoglires</taxon>
        <taxon>Primates</taxon>
        <taxon>Haplorrhini</taxon>
        <taxon>Catarrhini</taxon>
        <taxon>Hominidae</taxon>
        <taxon>Homo</taxon>
    </lineage>
</organism>
<accession>Q03989</accession>
<accession>C9J1Q0</accession>
<accession>Q6NX37</accession>
<reference key="1">
    <citation type="journal article" date="1996" name="Nucleic Acids Res.">
        <title>Repression by a differentiation-specific factor of the human cytomegalovirus enhancer.</title>
        <authorList>
            <person name="Huang T.H."/>
            <person name="Oka T."/>
            <person name="Asai T."/>
            <person name="Okada T."/>
            <person name="Merrills B.W."/>
            <person name="Gertson P.N."/>
            <person name="Whitson R.H."/>
            <person name="Itakura K."/>
        </authorList>
    </citation>
    <scope>NUCLEOTIDE SEQUENCE [MRNA] (ISOFORM 1)</scope>
    <scope>FUNCTION</scope>
    <scope>SUBCELLULAR LOCATION</scope>
    <source>
        <tissue>Foreskin fibroblast</tissue>
    </source>
</reference>
<reference key="2">
    <citation type="journal article" date="2005" name="Nature">
        <title>Generation and annotation of the DNA sequences of human chromosomes 2 and 4.</title>
        <authorList>
            <person name="Hillier L.W."/>
            <person name="Graves T.A."/>
            <person name="Fulton R.S."/>
            <person name="Fulton L.A."/>
            <person name="Pepin K.H."/>
            <person name="Minx P."/>
            <person name="Wagner-McPherson C."/>
            <person name="Layman D."/>
            <person name="Wylie K."/>
            <person name="Sekhon M."/>
            <person name="Becker M.C."/>
            <person name="Fewell G.A."/>
            <person name="Delehaunty K.D."/>
            <person name="Miner T.L."/>
            <person name="Nash W.E."/>
            <person name="Kremitzki C."/>
            <person name="Oddy L."/>
            <person name="Du H."/>
            <person name="Sun H."/>
            <person name="Bradshaw-Cordum H."/>
            <person name="Ali J."/>
            <person name="Carter J."/>
            <person name="Cordes M."/>
            <person name="Harris A."/>
            <person name="Isak A."/>
            <person name="van Brunt A."/>
            <person name="Nguyen C."/>
            <person name="Du F."/>
            <person name="Courtney L."/>
            <person name="Kalicki J."/>
            <person name="Ozersky P."/>
            <person name="Abbott S."/>
            <person name="Armstrong J."/>
            <person name="Belter E.A."/>
            <person name="Caruso L."/>
            <person name="Cedroni M."/>
            <person name="Cotton M."/>
            <person name="Davidson T."/>
            <person name="Desai A."/>
            <person name="Elliott G."/>
            <person name="Erb T."/>
            <person name="Fronick C."/>
            <person name="Gaige T."/>
            <person name="Haakenson W."/>
            <person name="Haglund K."/>
            <person name="Holmes A."/>
            <person name="Harkins R."/>
            <person name="Kim K."/>
            <person name="Kruchowski S.S."/>
            <person name="Strong C.M."/>
            <person name="Grewal N."/>
            <person name="Goyea E."/>
            <person name="Hou S."/>
            <person name="Levy A."/>
            <person name="Martinka S."/>
            <person name="Mead K."/>
            <person name="McLellan M.D."/>
            <person name="Meyer R."/>
            <person name="Randall-Maher J."/>
            <person name="Tomlinson C."/>
            <person name="Dauphin-Kohlberg S."/>
            <person name="Kozlowicz-Reilly A."/>
            <person name="Shah N."/>
            <person name="Swearengen-Shahid S."/>
            <person name="Snider J."/>
            <person name="Strong J.T."/>
            <person name="Thompson J."/>
            <person name="Yoakum M."/>
            <person name="Leonard S."/>
            <person name="Pearman C."/>
            <person name="Trani L."/>
            <person name="Radionenko M."/>
            <person name="Waligorski J.E."/>
            <person name="Wang C."/>
            <person name="Rock S.M."/>
            <person name="Tin-Wollam A.-M."/>
            <person name="Maupin R."/>
            <person name="Latreille P."/>
            <person name="Wendl M.C."/>
            <person name="Yang S.-P."/>
            <person name="Pohl C."/>
            <person name="Wallis J.W."/>
            <person name="Spieth J."/>
            <person name="Bieri T.A."/>
            <person name="Berkowicz N."/>
            <person name="Nelson J.O."/>
            <person name="Osborne J."/>
            <person name="Ding L."/>
            <person name="Meyer R."/>
            <person name="Sabo A."/>
            <person name="Shotland Y."/>
            <person name="Sinha P."/>
            <person name="Wohldmann P.E."/>
            <person name="Cook L.L."/>
            <person name="Hickenbotham M.T."/>
            <person name="Eldred J."/>
            <person name="Williams D."/>
            <person name="Jones T.A."/>
            <person name="She X."/>
            <person name="Ciccarelli F.D."/>
            <person name="Izaurralde E."/>
            <person name="Taylor J."/>
            <person name="Schmutz J."/>
            <person name="Myers R.M."/>
            <person name="Cox D.R."/>
            <person name="Huang X."/>
            <person name="McPherson J.D."/>
            <person name="Mardis E.R."/>
            <person name="Clifton S.W."/>
            <person name="Warren W.C."/>
            <person name="Chinwalla A.T."/>
            <person name="Eddy S.R."/>
            <person name="Marra M.A."/>
            <person name="Ovcharenko I."/>
            <person name="Furey T.S."/>
            <person name="Miller W."/>
            <person name="Eichler E.E."/>
            <person name="Bork P."/>
            <person name="Suyama M."/>
            <person name="Torrents D."/>
            <person name="Waterston R.H."/>
            <person name="Wilson R.K."/>
        </authorList>
    </citation>
    <scope>NUCLEOTIDE SEQUENCE [LARGE SCALE GENOMIC DNA]</scope>
</reference>
<reference key="3">
    <citation type="submission" date="2005-09" db="EMBL/GenBank/DDBJ databases">
        <authorList>
            <person name="Mural R.J."/>
            <person name="Istrail S."/>
            <person name="Sutton G.G."/>
            <person name="Florea L."/>
            <person name="Halpern A.L."/>
            <person name="Mobarry C.M."/>
            <person name="Lippert R."/>
            <person name="Walenz B."/>
            <person name="Shatkay H."/>
            <person name="Dew I."/>
            <person name="Miller J.R."/>
            <person name="Flanigan M.J."/>
            <person name="Edwards N.J."/>
            <person name="Bolanos R."/>
            <person name="Fasulo D."/>
            <person name="Halldorsson B.V."/>
            <person name="Hannenhalli S."/>
            <person name="Turner R."/>
            <person name="Yooseph S."/>
            <person name="Lu F."/>
            <person name="Nusskern D.R."/>
            <person name="Shue B.C."/>
            <person name="Zheng X.H."/>
            <person name="Zhong F."/>
            <person name="Delcher A.L."/>
            <person name="Huson D.H."/>
            <person name="Kravitz S.A."/>
            <person name="Mouchard L."/>
            <person name="Reinert K."/>
            <person name="Remington K.A."/>
            <person name="Clark A.G."/>
            <person name="Waterman M.S."/>
            <person name="Eichler E.E."/>
            <person name="Adams M.D."/>
            <person name="Hunkapiller M.W."/>
            <person name="Myers E.W."/>
            <person name="Venter J.C."/>
        </authorList>
    </citation>
    <scope>NUCLEOTIDE SEQUENCE [LARGE SCALE GENOMIC DNA]</scope>
</reference>
<reference key="4">
    <citation type="journal article" date="2004" name="Genome Res.">
        <title>The status, quality, and expansion of the NIH full-length cDNA project: the Mammalian Gene Collection (MGC).</title>
        <authorList>
            <consortium name="The MGC Project Team"/>
        </authorList>
    </citation>
    <scope>NUCLEOTIDE SEQUENCE [LARGE SCALE MRNA] (ISOFORM 2)</scope>
</reference>
<reference key="5">
    <citation type="journal article" date="2005" name="Mol. Endocrinol.">
        <title>Modulator recognition factor 1, an AT-rich interaction domain family member, is a novel corepressor for estrogen receptor alpha.</title>
        <authorList>
            <person name="Georgescu S.P."/>
            <person name="Li J.H."/>
            <person name="Lu Q."/>
            <person name="Karas R.H."/>
            <person name="Brown M."/>
            <person name="Mendelsohn M.E."/>
        </authorList>
    </citation>
    <scope>FUNCTION</scope>
    <scope>INTERACTION WITH ESR1</scope>
</reference>
<reference key="6">
    <citation type="journal article" date="2020" name="Sci. Signal.">
        <title>Noncanonical STAT1 phosphorylation expands its transcriptional activity into promoting LPS-induced IL-6 and IL-12p40 production.</title>
        <authorList>
            <person name="Metwally H."/>
            <person name="Tanaka T."/>
            <person name="Li S."/>
            <person name="Parajuli G."/>
            <person name="Kang S."/>
            <person name="Hanieh H."/>
            <person name="Hashimoto S."/>
            <person name="Chalise J.P."/>
            <person name="Gemechu Y."/>
            <person name="Standley D.M."/>
            <person name="Kishimoto T."/>
        </authorList>
    </citation>
    <scope>FUNCTION</scope>
</reference>